<evidence type="ECO:0000250" key="1">
    <source>
        <dbReference type="UniProtKB" id="P41441"/>
    </source>
</evidence>
<evidence type="ECO:0000250" key="2">
    <source>
        <dbReference type="UniProtKB" id="P45780"/>
    </source>
</evidence>
<evidence type="ECO:0000250" key="3">
    <source>
        <dbReference type="UniProtKB" id="Q00513"/>
    </source>
</evidence>
<evidence type="ECO:0000250" key="4">
    <source>
        <dbReference type="UniProtKB" id="Q00514"/>
    </source>
</evidence>
<evidence type="ECO:0000255" key="5"/>
<evidence type="ECO:0000305" key="6"/>
<sequence length="405" mass="44024">MPLYRYKALDAHGEMLDGQMEAANDAEVALRLQEQGHLPVETRLATGENGSPSLRMLLRKKPFDNAALVQFTQQLATLIGAGQPLDRALSILMDLPEDDKSRRVIADIRDTVRGGAPLSVALERQHGLFSKLYINMVRAGEAGGSMQDTLQRLADYLERSRALKGKVINALIYPAILLAVVGCALLFLLGYVVPQFAQMYESLDVALPWFTQAVLSVGLLVRDWWLVLVVIPGVLGLWLDRKRRNAAFRAALDAWLLRQKVIGSLIARLETARLTRTLGTLLRNGVPLLAAIGIARNVMSNTALVEDVAAAADDVKNGHGLSMSLARGKRFPRLALQMIQVGEESGALDTMLLKTADTFELETAQAIDRALAALVPLITLVLASVVGLVIISVLVPLYDLTNAIG</sequence>
<reference key="1">
    <citation type="journal article" date="1991" name="Mol. Gen. Genet.">
        <title>Structural characterization of protein secretion genes of the bacterial phytopathogen Xanthomonas campestris pathovar campestris: relatedness to secretion systems of other Gram-negative bacteria.</title>
        <authorList>
            <person name="Dums F."/>
            <person name="Dow J.M."/>
            <person name="Daniels M.J."/>
        </authorList>
    </citation>
    <scope>NUCLEOTIDE SEQUENCE [GENOMIC DNA]</scope>
    <source>
        <strain>8000 NCPPB 1145</strain>
    </source>
</reference>
<reference key="2">
    <citation type="submission" date="2005-08" db="EMBL/GenBank/DDBJ databases">
        <authorList>
            <person name="Hu N.-T.T."/>
            <person name="Hung M.-N."/>
            <person name="Wang K.C."/>
        </authorList>
    </citation>
    <scope>NUCLEOTIDE SEQUENCE [GENOMIC DNA]</scope>
    <source>
        <strain>Xc1701</strain>
    </source>
</reference>
<reference key="3">
    <citation type="journal article" date="2002" name="Nature">
        <title>Comparison of the genomes of two Xanthomonas pathogens with differing host specificities.</title>
        <authorList>
            <person name="da Silva A.C.R."/>
            <person name="Ferro J.A."/>
            <person name="Reinach F.C."/>
            <person name="Farah C.S."/>
            <person name="Furlan L.R."/>
            <person name="Quaggio R.B."/>
            <person name="Monteiro-Vitorello C.B."/>
            <person name="Van Sluys M.A."/>
            <person name="Almeida N.F. Jr."/>
            <person name="Alves L.M.C."/>
            <person name="do Amaral A.M."/>
            <person name="Bertolini M.C."/>
            <person name="Camargo L.E.A."/>
            <person name="Camarotte G."/>
            <person name="Cannavan F."/>
            <person name="Cardozo J."/>
            <person name="Chambergo F."/>
            <person name="Ciapina L.P."/>
            <person name="Cicarelli R.M.B."/>
            <person name="Coutinho L.L."/>
            <person name="Cursino-Santos J.R."/>
            <person name="El-Dorry H."/>
            <person name="Faria J.B."/>
            <person name="Ferreira A.J.S."/>
            <person name="Ferreira R.C.C."/>
            <person name="Ferro M.I.T."/>
            <person name="Formighieri E.F."/>
            <person name="Franco M.C."/>
            <person name="Greggio C.C."/>
            <person name="Gruber A."/>
            <person name="Katsuyama A.M."/>
            <person name="Kishi L.T."/>
            <person name="Leite R.P."/>
            <person name="Lemos E.G.M."/>
            <person name="Lemos M.V.F."/>
            <person name="Locali E.C."/>
            <person name="Machado M.A."/>
            <person name="Madeira A.M.B.N."/>
            <person name="Martinez-Rossi N.M."/>
            <person name="Martins E.C."/>
            <person name="Meidanis J."/>
            <person name="Menck C.F.M."/>
            <person name="Miyaki C.Y."/>
            <person name="Moon D.H."/>
            <person name="Moreira L.M."/>
            <person name="Novo M.T.M."/>
            <person name="Okura V.K."/>
            <person name="Oliveira M.C."/>
            <person name="Oliveira V.R."/>
            <person name="Pereira H.A."/>
            <person name="Rossi A."/>
            <person name="Sena J.A.D."/>
            <person name="Silva C."/>
            <person name="de Souza R.F."/>
            <person name="Spinola L.A.F."/>
            <person name="Takita M.A."/>
            <person name="Tamura R.E."/>
            <person name="Teixeira E.C."/>
            <person name="Tezza R.I.D."/>
            <person name="Trindade dos Santos M."/>
            <person name="Truffi D."/>
            <person name="Tsai S.M."/>
            <person name="White F.F."/>
            <person name="Setubal J.C."/>
            <person name="Kitajima J.P."/>
        </authorList>
    </citation>
    <scope>NUCLEOTIDE SEQUENCE [LARGE SCALE GENOMIC DNA]</scope>
    <source>
        <strain>ATCC 33913 / DSM 3586 / NCPPB 528 / LMG 568 / P 25</strain>
    </source>
</reference>
<keyword id="KW-0106">Calcium</keyword>
<keyword id="KW-0997">Cell inner membrane</keyword>
<keyword id="KW-1003">Cell membrane</keyword>
<keyword id="KW-0472">Membrane</keyword>
<keyword id="KW-0479">Metal-binding</keyword>
<keyword id="KW-0653">Protein transport</keyword>
<keyword id="KW-1185">Reference proteome</keyword>
<keyword id="KW-0812">Transmembrane</keyword>
<keyword id="KW-1133">Transmembrane helix</keyword>
<keyword id="KW-0813">Transport</keyword>
<organism>
    <name type="scientific">Xanthomonas campestris pv. campestris (strain ATCC 33913 / DSM 3586 / NCPPB 528 / LMG 568 / P 25)</name>
    <dbReference type="NCBI Taxonomy" id="190485"/>
    <lineage>
        <taxon>Bacteria</taxon>
        <taxon>Pseudomonadati</taxon>
        <taxon>Pseudomonadota</taxon>
        <taxon>Gammaproteobacteria</taxon>
        <taxon>Lysobacterales</taxon>
        <taxon>Lysobacteraceae</taxon>
        <taxon>Xanthomonas</taxon>
    </lineage>
</organism>
<comment type="function">
    <text evidence="4">Component of the type II secretion system inner membrane complex required for the energy-dependent secretion of extracellular factors such as proteases and toxins from the periplasm.</text>
</comment>
<comment type="subunit">
    <text evidence="2 3 4">Type II secretion system is composed of four main components: the outer membrane complex, the inner membrane complex, the cytoplasmic secretion ATPase and the periplasm-spanning pseudopilus (By similarity). Homodimer (By similarity). Interacts with XpsE and XpsL components (By similarity).</text>
</comment>
<comment type="subcellular location">
    <subcellularLocation>
        <location evidence="6">Cell inner membrane</location>
        <topology evidence="6">Multi-pass membrane protein</topology>
    </subcellularLocation>
</comment>
<comment type="similarity">
    <text evidence="6">Belongs to the GSP F family.</text>
</comment>
<comment type="sequence caution" evidence="6">
    <conflict type="erroneous initiation">
        <sequence resource="EMBL-CDS" id="CAA41804"/>
    </conflict>
    <text>Truncated N-terminus.</text>
</comment>
<proteinExistence type="inferred from homology"/>
<accession>P31744</accession>
<feature type="chain" id="PRO_0000207837" description="Type II secretion system protein F">
    <location>
        <begin position="1"/>
        <end position="405"/>
    </location>
</feature>
<feature type="topological domain" description="Cytoplasmic" evidence="3">
    <location>
        <begin position="1"/>
        <end position="169"/>
    </location>
</feature>
<feature type="transmembrane region" description="Helical" evidence="5">
    <location>
        <begin position="170"/>
        <end position="190"/>
    </location>
</feature>
<feature type="topological domain" description="Periplasmic" evidence="3">
    <location>
        <begin position="191"/>
        <end position="218"/>
    </location>
</feature>
<feature type="transmembrane region" description="Helical" evidence="5">
    <location>
        <begin position="219"/>
        <end position="239"/>
    </location>
</feature>
<feature type="topological domain" description="Cytoplasmic" evidence="3">
    <location>
        <begin position="240"/>
        <end position="370"/>
    </location>
</feature>
<feature type="transmembrane region" description="Helical" evidence="5">
    <location>
        <begin position="371"/>
        <end position="391"/>
    </location>
</feature>
<feature type="topological domain" description="Periplasmic" evidence="1">
    <location>
        <begin position="392"/>
        <end position="405"/>
    </location>
</feature>
<feature type="binding site" evidence="2">
    <location>
        <position position="98"/>
    </location>
    <ligand>
        <name>Ca(2+)</name>
        <dbReference type="ChEBI" id="CHEBI:29108"/>
    </ligand>
</feature>
<feature type="binding site" evidence="2">
    <location>
        <position position="151"/>
    </location>
    <ligand>
        <name>Ca(2+)</name>
        <dbReference type="ChEBI" id="CHEBI:29108"/>
    </ligand>
</feature>
<feature type="binding site" evidence="2">
    <location>
        <position position="155"/>
    </location>
    <ligand>
        <name>Ca(2+)</name>
        <dbReference type="ChEBI" id="CHEBI:29108"/>
    </ligand>
</feature>
<feature type="sequence conflict" description="In Ref. 2; AAC27376." evidence="6" ref="2">
    <original>A</original>
    <variation>S</variation>
    <location>
        <position position="67"/>
    </location>
</feature>
<feature type="sequence conflict" description="In Ref. 1; CAA41804." evidence="6" ref="1">
    <original>GG</original>
    <variation>A</variation>
    <location>
        <begin position="114"/>
        <end position="115"/>
    </location>
</feature>
<feature type="sequence conflict" description="In Ref. 1; CAA41804." evidence="6" ref="1">
    <original>G</original>
    <variation>A</variation>
    <location>
        <position position="346"/>
    </location>
</feature>
<name>GSPF_XANCP</name>
<gene>
    <name type="primary">xpsF</name>
    <name type="synonym">pefF</name>
    <name type="ordered locus">XCC0661</name>
</gene>
<protein>
    <recommendedName>
        <fullName>Type II secretion system protein F</fullName>
        <shortName>T2SS protein F</shortName>
    </recommendedName>
    <alternativeName>
        <fullName>General secretion pathway protein F</fullName>
    </alternativeName>
</protein>
<dbReference type="EMBL" id="X59079">
    <property type="protein sequence ID" value="CAA41804.1"/>
    <property type="status" value="ALT_INIT"/>
    <property type="molecule type" value="Genomic_DNA"/>
</dbReference>
<dbReference type="EMBL" id="L02630">
    <property type="protein sequence ID" value="AAC27376.3"/>
    <property type="molecule type" value="Genomic_DNA"/>
</dbReference>
<dbReference type="EMBL" id="AE008922">
    <property type="protein sequence ID" value="AAM39977.1"/>
    <property type="molecule type" value="Genomic_DNA"/>
</dbReference>
<dbReference type="PIR" id="S17938">
    <property type="entry name" value="S17938"/>
</dbReference>
<dbReference type="PIR" id="T12057">
    <property type="entry name" value="T12057"/>
</dbReference>
<dbReference type="RefSeq" id="NP_636053.1">
    <property type="nucleotide sequence ID" value="NC_003902.1"/>
</dbReference>
<dbReference type="RefSeq" id="WP_011035901.1">
    <property type="nucleotide sequence ID" value="NC_003902.1"/>
</dbReference>
<dbReference type="SMR" id="P31744"/>
<dbReference type="STRING" id="190485.XCC0661"/>
<dbReference type="EnsemblBacteria" id="AAM39977">
    <property type="protein sequence ID" value="AAM39977"/>
    <property type="gene ID" value="XCC0661"/>
</dbReference>
<dbReference type="KEGG" id="xcc:XCC0661"/>
<dbReference type="PATRIC" id="fig|190485.4.peg.725"/>
<dbReference type="eggNOG" id="COG1459">
    <property type="taxonomic scope" value="Bacteria"/>
</dbReference>
<dbReference type="HOGENOM" id="CLU_035032_2_1_6"/>
<dbReference type="OrthoDB" id="9805682at2"/>
<dbReference type="Proteomes" id="UP000001010">
    <property type="component" value="Chromosome"/>
</dbReference>
<dbReference type="GO" id="GO:0005886">
    <property type="term" value="C:plasma membrane"/>
    <property type="evidence" value="ECO:0000318"/>
    <property type="project" value="GO_Central"/>
</dbReference>
<dbReference type="GO" id="GO:0046872">
    <property type="term" value="F:metal ion binding"/>
    <property type="evidence" value="ECO:0007669"/>
    <property type="project" value="UniProtKB-KW"/>
</dbReference>
<dbReference type="GO" id="GO:0015628">
    <property type="term" value="P:protein secretion by the type II secretion system"/>
    <property type="evidence" value="ECO:0000318"/>
    <property type="project" value="GO_Central"/>
</dbReference>
<dbReference type="FunFam" id="1.20.81.30:FF:000001">
    <property type="entry name" value="Type II secretion system protein F"/>
    <property type="match status" value="2"/>
</dbReference>
<dbReference type="Gene3D" id="1.20.81.30">
    <property type="entry name" value="Type II secretion system (T2SS), domain F"/>
    <property type="match status" value="2"/>
</dbReference>
<dbReference type="InterPro" id="IPR003004">
    <property type="entry name" value="GspF/PilC"/>
</dbReference>
<dbReference type="InterPro" id="IPR001992">
    <property type="entry name" value="T2SS_GspF/T4SS_PilC_CS"/>
</dbReference>
<dbReference type="InterPro" id="IPR018076">
    <property type="entry name" value="T2SS_GspF_dom"/>
</dbReference>
<dbReference type="InterPro" id="IPR042094">
    <property type="entry name" value="T2SS_GspF_sf"/>
</dbReference>
<dbReference type="NCBIfam" id="NF047826">
    <property type="entry name" value="T3SSXpsF"/>
    <property type="match status" value="1"/>
</dbReference>
<dbReference type="PANTHER" id="PTHR30012">
    <property type="entry name" value="GENERAL SECRETION PATHWAY PROTEIN"/>
    <property type="match status" value="1"/>
</dbReference>
<dbReference type="PANTHER" id="PTHR30012:SF7">
    <property type="entry name" value="PROTEIN TRANSPORT PROTEIN HOFC HOMOLOG"/>
    <property type="match status" value="1"/>
</dbReference>
<dbReference type="Pfam" id="PF00482">
    <property type="entry name" value="T2SSF"/>
    <property type="match status" value="2"/>
</dbReference>
<dbReference type="PRINTS" id="PR00812">
    <property type="entry name" value="BCTERIALGSPF"/>
</dbReference>
<dbReference type="PROSITE" id="PS00874">
    <property type="entry name" value="T2SP_F"/>
    <property type="match status" value="1"/>
</dbReference>